<protein>
    <recommendedName>
        <fullName evidence="1">Probable transcriptional regulatory protein APH_0480</fullName>
    </recommendedName>
</protein>
<feature type="chain" id="PRO_0000257031" description="Probable transcriptional regulatory protein APH_0480">
    <location>
        <begin position="1"/>
        <end position="245"/>
    </location>
</feature>
<sequence>MAGHSQFANIKHRKGAQDAKRAKLFTKLRKEIIVAARSGSPVPELNPNLRSAIASAKAFNLPKDRIEAAIRSAQGNEADDSYEEITYEGYGPGSVAIVVHALSNNRNRTAGELRHIFTRHGGKLGERGSISYLFDHVGLIVYGAAQVGSFDVIFDEATSLGAIDLEEHDNGEEKEYHVICQVEDFGRIRDALYEKFSDGVTARLSWRPKQKVKPASDEASAKLISFLNDLDDNDDVQYVEGDFEL</sequence>
<keyword id="KW-0963">Cytoplasm</keyword>
<keyword id="KW-0238">DNA-binding</keyword>
<keyword id="KW-0804">Transcription</keyword>
<keyword id="KW-0805">Transcription regulation</keyword>
<evidence type="ECO:0000255" key="1">
    <source>
        <dbReference type="HAMAP-Rule" id="MF_00693"/>
    </source>
</evidence>
<comment type="subcellular location">
    <subcellularLocation>
        <location evidence="1">Cytoplasm</location>
    </subcellularLocation>
</comment>
<comment type="similarity">
    <text evidence="1">Belongs to the TACO1 family.</text>
</comment>
<organism>
    <name type="scientific">Anaplasma phagocytophilum (strain HZ)</name>
    <dbReference type="NCBI Taxonomy" id="212042"/>
    <lineage>
        <taxon>Bacteria</taxon>
        <taxon>Pseudomonadati</taxon>
        <taxon>Pseudomonadota</taxon>
        <taxon>Alphaproteobacteria</taxon>
        <taxon>Rickettsiales</taxon>
        <taxon>Anaplasmataceae</taxon>
        <taxon>Anaplasma</taxon>
        <taxon>phagocytophilum group</taxon>
    </lineage>
</organism>
<reference key="1">
    <citation type="journal article" date="2006" name="PLoS Genet.">
        <title>Comparative genomics of emerging human ehrlichiosis agents.</title>
        <authorList>
            <person name="Dunning Hotopp J.C."/>
            <person name="Lin M."/>
            <person name="Madupu R."/>
            <person name="Crabtree J."/>
            <person name="Angiuoli S.V."/>
            <person name="Eisen J.A."/>
            <person name="Seshadri R."/>
            <person name="Ren Q."/>
            <person name="Wu M."/>
            <person name="Utterback T.R."/>
            <person name="Smith S."/>
            <person name="Lewis M."/>
            <person name="Khouri H."/>
            <person name="Zhang C."/>
            <person name="Niu H."/>
            <person name="Lin Q."/>
            <person name="Ohashi N."/>
            <person name="Zhi N."/>
            <person name="Nelson W.C."/>
            <person name="Brinkac L.M."/>
            <person name="Dodson R.J."/>
            <person name="Rosovitz M.J."/>
            <person name="Sundaram J.P."/>
            <person name="Daugherty S.C."/>
            <person name="Davidsen T."/>
            <person name="Durkin A.S."/>
            <person name="Gwinn M.L."/>
            <person name="Haft D.H."/>
            <person name="Selengut J.D."/>
            <person name="Sullivan S.A."/>
            <person name="Zafar N."/>
            <person name="Zhou L."/>
            <person name="Benahmed F."/>
            <person name="Forberger H."/>
            <person name="Halpin R."/>
            <person name="Mulligan S."/>
            <person name="Robinson J."/>
            <person name="White O."/>
            <person name="Rikihisa Y."/>
            <person name="Tettelin H."/>
        </authorList>
    </citation>
    <scope>NUCLEOTIDE SEQUENCE [LARGE SCALE GENOMIC DNA]</scope>
    <source>
        <strain>HZ</strain>
    </source>
</reference>
<dbReference type="EMBL" id="CP000235">
    <property type="protein sequence ID" value="ABD43896.1"/>
    <property type="molecule type" value="Genomic_DNA"/>
</dbReference>
<dbReference type="RefSeq" id="WP_011450601.1">
    <property type="nucleotide sequence ID" value="NC_007797.1"/>
</dbReference>
<dbReference type="SMR" id="Q2GKM2"/>
<dbReference type="STRING" id="212042.APH_0480"/>
<dbReference type="PaxDb" id="212042-APH_0480"/>
<dbReference type="EnsemblBacteria" id="ABD43896">
    <property type="protein sequence ID" value="ABD43896"/>
    <property type="gene ID" value="APH_0480"/>
</dbReference>
<dbReference type="KEGG" id="aph:APH_0480"/>
<dbReference type="eggNOG" id="COG0217">
    <property type="taxonomic scope" value="Bacteria"/>
</dbReference>
<dbReference type="HOGENOM" id="CLU_062974_2_2_5"/>
<dbReference type="Proteomes" id="UP000001943">
    <property type="component" value="Chromosome"/>
</dbReference>
<dbReference type="GO" id="GO:0005737">
    <property type="term" value="C:cytoplasm"/>
    <property type="evidence" value="ECO:0007669"/>
    <property type="project" value="UniProtKB-SubCell"/>
</dbReference>
<dbReference type="GO" id="GO:0003677">
    <property type="term" value="F:DNA binding"/>
    <property type="evidence" value="ECO:0007669"/>
    <property type="project" value="UniProtKB-UniRule"/>
</dbReference>
<dbReference type="GO" id="GO:0006355">
    <property type="term" value="P:regulation of DNA-templated transcription"/>
    <property type="evidence" value="ECO:0007669"/>
    <property type="project" value="UniProtKB-UniRule"/>
</dbReference>
<dbReference type="FunFam" id="1.10.10.200:FF:000002">
    <property type="entry name" value="Probable transcriptional regulatory protein CLM62_37755"/>
    <property type="match status" value="1"/>
</dbReference>
<dbReference type="Gene3D" id="1.10.10.200">
    <property type="match status" value="1"/>
</dbReference>
<dbReference type="Gene3D" id="3.30.70.980">
    <property type="match status" value="2"/>
</dbReference>
<dbReference type="HAMAP" id="MF_00693">
    <property type="entry name" value="Transcrip_reg_TACO1"/>
    <property type="match status" value="1"/>
</dbReference>
<dbReference type="InterPro" id="IPR017856">
    <property type="entry name" value="Integrase-like_N"/>
</dbReference>
<dbReference type="InterPro" id="IPR048300">
    <property type="entry name" value="TACO1_YebC-like_2nd/3rd_dom"/>
</dbReference>
<dbReference type="InterPro" id="IPR049083">
    <property type="entry name" value="TACO1_YebC_N"/>
</dbReference>
<dbReference type="InterPro" id="IPR002876">
    <property type="entry name" value="Transcrip_reg_TACO1-like"/>
</dbReference>
<dbReference type="InterPro" id="IPR026564">
    <property type="entry name" value="Transcrip_reg_TACO1-like_dom3"/>
</dbReference>
<dbReference type="InterPro" id="IPR029072">
    <property type="entry name" value="YebC-like"/>
</dbReference>
<dbReference type="NCBIfam" id="NF001030">
    <property type="entry name" value="PRK00110.1"/>
    <property type="match status" value="1"/>
</dbReference>
<dbReference type="NCBIfam" id="NF009044">
    <property type="entry name" value="PRK12378.1"/>
    <property type="match status" value="1"/>
</dbReference>
<dbReference type="NCBIfam" id="TIGR01033">
    <property type="entry name" value="YebC/PmpR family DNA-binding transcriptional regulator"/>
    <property type="match status" value="1"/>
</dbReference>
<dbReference type="PANTHER" id="PTHR12532:SF11">
    <property type="match status" value="1"/>
</dbReference>
<dbReference type="PANTHER" id="PTHR12532">
    <property type="entry name" value="TRANSLATIONAL ACTIVATOR OF CYTOCHROME C OXIDASE 1"/>
    <property type="match status" value="1"/>
</dbReference>
<dbReference type="Pfam" id="PF20772">
    <property type="entry name" value="TACO1_YebC_N"/>
    <property type="match status" value="1"/>
</dbReference>
<dbReference type="Pfam" id="PF01709">
    <property type="entry name" value="Transcrip_reg"/>
    <property type="match status" value="1"/>
</dbReference>
<dbReference type="SUPFAM" id="SSF75625">
    <property type="entry name" value="YebC-like"/>
    <property type="match status" value="1"/>
</dbReference>
<gene>
    <name type="ordered locus">APH_0480</name>
</gene>
<accession>Q2GKM2</accession>
<name>Y480_ANAPZ</name>
<proteinExistence type="inferred from homology"/>